<protein>
    <recommendedName>
        <fullName>Uncharacterized protein TP_0415</fullName>
    </recommendedName>
</protein>
<keyword id="KW-1185">Reference proteome</keyword>
<organism>
    <name type="scientific">Treponema pallidum (strain Nichols)</name>
    <dbReference type="NCBI Taxonomy" id="243276"/>
    <lineage>
        <taxon>Bacteria</taxon>
        <taxon>Pseudomonadati</taxon>
        <taxon>Spirochaetota</taxon>
        <taxon>Spirochaetia</taxon>
        <taxon>Spirochaetales</taxon>
        <taxon>Treponemataceae</taxon>
        <taxon>Treponema</taxon>
    </lineage>
</organism>
<name>Y415_TREPA</name>
<accession>O83430</accession>
<sequence length="177" mass="19319">MRSRKGRGARRWMSHENGVAVHGNVGVEGARKFLESRCVLKEAEGGEICWSVIVEKKVDDIRVKGEQHGGFLCAGMWGDFVGTGEERIAGRDRTEEAHVTGKEGKVFRRQGVEGGTLRVRLEKCRIVGWGMYGGPGVVRVFCARSGAHSALSAKRAQAAYLAMWPSIGCISFRVCPA</sequence>
<dbReference type="EMBL" id="AE000520">
    <property type="protein sequence ID" value="AAC65407.1"/>
    <property type="molecule type" value="Genomic_DNA"/>
</dbReference>
<dbReference type="PIR" id="E71327">
    <property type="entry name" value="E71327"/>
</dbReference>
<dbReference type="RefSeq" id="WP_010881863.1">
    <property type="nucleotide sequence ID" value="NC_000919.1"/>
</dbReference>
<dbReference type="STRING" id="243276.TP_0415"/>
<dbReference type="EnsemblBacteria" id="AAC65407">
    <property type="protein sequence ID" value="AAC65407"/>
    <property type="gene ID" value="TP_0415"/>
</dbReference>
<dbReference type="KEGG" id="tpa:TP_0415"/>
<dbReference type="HOGENOM" id="CLU_1554609_0_0_12"/>
<dbReference type="Proteomes" id="UP000000811">
    <property type="component" value="Chromosome"/>
</dbReference>
<reference key="1">
    <citation type="journal article" date="1998" name="Science">
        <title>Complete genome sequence of Treponema pallidum, the syphilis spirochete.</title>
        <authorList>
            <person name="Fraser C.M."/>
            <person name="Norris S.J."/>
            <person name="Weinstock G.M."/>
            <person name="White O."/>
            <person name="Sutton G.G."/>
            <person name="Dodson R.J."/>
            <person name="Gwinn M.L."/>
            <person name="Hickey E.K."/>
            <person name="Clayton R.A."/>
            <person name="Ketchum K.A."/>
            <person name="Sodergren E."/>
            <person name="Hardham J.M."/>
            <person name="McLeod M.P."/>
            <person name="Salzberg S.L."/>
            <person name="Peterson J.D."/>
            <person name="Khalak H.G."/>
            <person name="Richardson D.L."/>
            <person name="Howell J.K."/>
            <person name="Chidambaram M."/>
            <person name="Utterback T.R."/>
            <person name="McDonald L.A."/>
            <person name="Artiach P."/>
            <person name="Bowman C."/>
            <person name="Cotton M.D."/>
            <person name="Fujii C."/>
            <person name="Garland S.A."/>
            <person name="Hatch B."/>
            <person name="Horst K."/>
            <person name="Roberts K.M."/>
            <person name="Sandusky M."/>
            <person name="Weidman J.F."/>
            <person name="Smith H.O."/>
            <person name="Venter J.C."/>
        </authorList>
    </citation>
    <scope>NUCLEOTIDE SEQUENCE [LARGE SCALE GENOMIC DNA]</scope>
    <source>
        <strain>Nichols</strain>
    </source>
</reference>
<proteinExistence type="predicted"/>
<gene>
    <name type="ordered locus">TP_0415</name>
</gene>
<feature type="chain" id="PRO_0000202250" description="Uncharacterized protein TP_0415">
    <location>
        <begin position="1"/>
        <end position="177"/>
    </location>
</feature>